<name>SYM_ECO81</name>
<keyword id="KW-0030">Aminoacyl-tRNA synthetase</keyword>
<keyword id="KW-0067">ATP-binding</keyword>
<keyword id="KW-0963">Cytoplasm</keyword>
<keyword id="KW-0436">Ligase</keyword>
<keyword id="KW-0479">Metal-binding</keyword>
<keyword id="KW-0547">Nucleotide-binding</keyword>
<keyword id="KW-0648">Protein biosynthesis</keyword>
<keyword id="KW-0694">RNA-binding</keyword>
<keyword id="KW-0820">tRNA-binding</keyword>
<keyword id="KW-0862">Zinc</keyword>
<protein>
    <recommendedName>
        <fullName evidence="1">Methionine--tRNA ligase</fullName>
        <ecNumber evidence="1">6.1.1.10</ecNumber>
    </recommendedName>
    <alternativeName>
        <fullName evidence="1">Methionyl-tRNA synthetase</fullName>
        <shortName evidence="1">MetRS</shortName>
    </alternativeName>
</protein>
<reference key="1">
    <citation type="journal article" date="2009" name="PLoS Genet.">
        <title>Organised genome dynamics in the Escherichia coli species results in highly diverse adaptive paths.</title>
        <authorList>
            <person name="Touchon M."/>
            <person name="Hoede C."/>
            <person name="Tenaillon O."/>
            <person name="Barbe V."/>
            <person name="Baeriswyl S."/>
            <person name="Bidet P."/>
            <person name="Bingen E."/>
            <person name="Bonacorsi S."/>
            <person name="Bouchier C."/>
            <person name="Bouvet O."/>
            <person name="Calteau A."/>
            <person name="Chiapello H."/>
            <person name="Clermont O."/>
            <person name="Cruveiller S."/>
            <person name="Danchin A."/>
            <person name="Diard M."/>
            <person name="Dossat C."/>
            <person name="Karoui M.E."/>
            <person name="Frapy E."/>
            <person name="Garry L."/>
            <person name="Ghigo J.M."/>
            <person name="Gilles A.M."/>
            <person name="Johnson J."/>
            <person name="Le Bouguenec C."/>
            <person name="Lescat M."/>
            <person name="Mangenot S."/>
            <person name="Martinez-Jehanne V."/>
            <person name="Matic I."/>
            <person name="Nassif X."/>
            <person name="Oztas S."/>
            <person name="Petit M.A."/>
            <person name="Pichon C."/>
            <person name="Rouy Z."/>
            <person name="Ruf C.S."/>
            <person name="Schneider D."/>
            <person name="Tourret J."/>
            <person name="Vacherie B."/>
            <person name="Vallenet D."/>
            <person name="Medigue C."/>
            <person name="Rocha E.P.C."/>
            <person name="Denamur E."/>
        </authorList>
    </citation>
    <scope>NUCLEOTIDE SEQUENCE [LARGE SCALE GENOMIC DNA]</scope>
    <source>
        <strain>ED1a</strain>
    </source>
</reference>
<dbReference type="EC" id="6.1.1.10" evidence="1"/>
<dbReference type="EMBL" id="CU928162">
    <property type="protein sequence ID" value="CAR08652.2"/>
    <property type="molecule type" value="Genomic_DNA"/>
</dbReference>
<dbReference type="RefSeq" id="WP_001296226.1">
    <property type="nucleotide sequence ID" value="NC_011745.1"/>
</dbReference>
<dbReference type="SMR" id="B7MX36"/>
<dbReference type="KEGG" id="ecq:ECED1_2470"/>
<dbReference type="HOGENOM" id="CLU_009710_7_0_6"/>
<dbReference type="Proteomes" id="UP000000748">
    <property type="component" value="Chromosome"/>
</dbReference>
<dbReference type="GO" id="GO:0005829">
    <property type="term" value="C:cytosol"/>
    <property type="evidence" value="ECO:0007669"/>
    <property type="project" value="TreeGrafter"/>
</dbReference>
<dbReference type="GO" id="GO:0005524">
    <property type="term" value="F:ATP binding"/>
    <property type="evidence" value="ECO:0007669"/>
    <property type="project" value="UniProtKB-UniRule"/>
</dbReference>
<dbReference type="GO" id="GO:0046872">
    <property type="term" value="F:metal ion binding"/>
    <property type="evidence" value="ECO:0007669"/>
    <property type="project" value="UniProtKB-KW"/>
</dbReference>
<dbReference type="GO" id="GO:0004825">
    <property type="term" value="F:methionine-tRNA ligase activity"/>
    <property type="evidence" value="ECO:0007669"/>
    <property type="project" value="UniProtKB-UniRule"/>
</dbReference>
<dbReference type="GO" id="GO:0000049">
    <property type="term" value="F:tRNA binding"/>
    <property type="evidence" value="ECO:0007669"/>
    <property type="project" value="UniProtKB-KW"/>
</dbReference>
<dbReference type="GO" id="GO:0006431">
    <property type="term" value="P:methionyl-tRNA aminoacylation"/>
    <property type="evidence" value="ECO:0007669"/>
    <property type="project" value="UniProtKB-UniRule"/>
</dbReference>
<dbReference type="CDD" id="cd07957">
    <property type="entry name" value="Anticodon_Ia_Met"/>
    <property type="match status" value="1"/>
</dbReference>
<dbReference type="CDD" id="cd00814">
    <property type="entry name" value="MetRS_core"/>
    <property type="match status" value="1"/>
</dbReference>
<dbReference type="CDD" id="cd02800">
    <property type="entry name" value="tRNA_bind_EcMetRS_like"/>
    <property type="match status" value="1"/>
</dbReference>
<dbReference type="FunFam" id="1.10.730.10:FF:000005">
    <property type="entry name" value="Methionine--tRNA ligase"/>
    <property type="match status" value="1"/>
</dbReference>
<dbReference type="FunFam" id="2.20.28.20:FF:000001">
    <property type="entry name" value="Methionine--tRNA ligase"/>
    <property type="match status" value="1"/>
</dbReference>
<dbReference type="FunFam" id="2.40.50.140:FF:000042">
    <property type="entry name" value="Methionine--tRNA ligase"/>
    <property type="match status" value="1"/>
</dbReference>
<dbReference type="Gene3D" id="3.40.50.620">
    <property type="entry name" value="HUPs"/>
    <property type="match status" value="1"/>
</dbReference>
<dbReference type="Gene3D" id="1.10.730.10">
    <property type="entry name" value="Isoleucyl-tRNA Synthetase, Domain 1"/>
    <property type="match status" value="1"/>
</dbReference>
<dbReference type="Gene3D" id="2.20.28.20">
    <property type="entry name" value="Methionyl-tRNA synthetase, Zn-domain"/>
    <property type="match status" value="1"/>
</dbReference>
<dbReference type="Gene3D" id="2.40.50.140">
    <property type="entry name" value="Nucleic acid-binding proteins"/>
    <property type="match status" value="1"/>
</dbReference>
<dbReference type="HAMAP" id="MF_00098">
    <property type="entry name" value="Met_tRNA_synth_type1"/>
    <property type="match status" value="1"/>
</dbReference>
<dbReference type="InterPro" id="IPR001412">
    <property type="entry name" value="aa-tRNA-synth_I_CS"/>
</dbReference>
<dbReference type="InterPro" id="IPR041872">
    <property type="entry name" value="Anticodon_Met"/>
</dbReference>
<dbReference type="InterPro" id="IPR004495">
    <property type="entry name" value="Met-tRNA-synth_bsu_C"/>
</dbReference>
<dbReference type="InterPro" id="IPR023458">
    <property type="entry name" value="Met-tRNA_ligase_1"/>
</dbReference>
<dbReference type="InterPro" id="IPR014758">
    <property type="entry name" value="Met-tRNA_synth"/>
</dbReference>
<dbReference type="InterPro" id="IPR015413">
    <property type="entry name" value="Methionyl/Leucyl_tRNA_Synth"/>
</dbReference>
<dbReference type="InterPro" id="IPR033911">
    <property type="entry name" value="MetRS_core"/>
</dbReference>
<dbReference type="InterPro" id="IPR029038">
    <property type="entry name" value="MetRS_Zn"/>
</dbReference>
<dbReference type="InterPro" id="IPR012340">
    <property type="entry name" value="NA-bd_OB-fold"/>
</dbReference>
<dbReference type="InterPro" id="IPR014729">
    <property type="entry name" value="Rossmann-like_a/b/a_fold"/>
</dbReference>
<dbReference type="InterPro" id="IPR002547">
    <property type="entry name" value="tRNA-bd_dom"/>
</dbReference>
<dbReference type="InterPro" id="IPR009080">
    <property type="entry name" value="tRNAsynth_Ia_anticodon-bd"/>
</dbReference>
<dbReference type="NCBIfam" id="TIGR00398">
    <property type="entry name" value="metG"/>
    <property type="match status" value="1"/>
</dbReference>
<dbReference type="NCBIfam" id="TIGR00399">
    <property type="entry name" value="metG_C_term"/>
    <property type="match status" value="1"/>
</dbReference>
<dbReference type="NCBIfam" id="NF001100">
    <property type="entry name" value="PRK00133.1"/>
    <property type="match status" value="1"/>
</dbReference>
<dbReference type="PANTHER" id="PTHR45765">
    <property type="entry name" value="METHIONINE--TRNA LIGASE"/>
    <property type="match status" value="1"/>
</dbReference>
<dbReference type="PANTHER" id="PTHR45765:SF1">
    <property type="entry name" value="METHIONINE--TRNA LIGASE, CYTOPLASMIC"/>
    <property type="match status" value="1"/>
</dbReference>
<dbReference type="Pfam" id="PF19303">
    <property type="entry name" value="Anticodon_3"/>
    <property type="match status" value="1"/>
</dbReference>
<dbReference type="Pfam" id="PF09334">
    <property type="entry name" value="tRNA-synt_1g"/>
    <property type="match status" value="1"/>
</dbReference>
<dbReference type="Pfam" id="PF01588">
    <property type="entry name" value="tRNA_bind"/>
    <property type="match status" value="1"/>
</dbReference>
<dbReference type="PRINTS" id="PR01041">
    <property type="entry name" value="TRNASYNTHMET"/>
</dbReference>
<dbReference type="SUPFAM" id="SSF47323">
    <property type="entry name" value="Anticodon-binding domain of a subclass of class I aminoacyl-tRNA synthetases"/>
    <property type="match status" value="1"/>
</dbReference>
<dbReference type="SUPFAM" id="SSF57770">
    <property type="entry name" value="Methionyl-tRNA synthetase (MetRS), Zn-domain"/>
    <property type="match status" value="1"/>
</dbReference>
<dbReference type="SUPFAM" id="SSF50249">
    <property type="entry name" value="Nucleic acid-binding proteins"/>
    <property type="match status" value="1"/>
</dbReference>
<dbReference type="SUPFAM" id="SSF52374">
    <property type="entry name" value="Nucleotidylyl transferase"/>
    <property type="match status" value="1"/>
</dbReference>
<dbReference type="PROSITE" id="PS00178">
    <property type="entry name" value="AA_TRNA_LIGASE_I"/>
    <property type="match status" value="1"/>
</dbReference>
<dbReference type="PROSITE" id="PS50886">
    <property type="entry name" value="TRBD"/>
    <property type="match status" value="1"/>
</dbReference>
<gene>
    <name evidence="1" type="primary">metG</name>
    <name type="ordered locus">ECED1_2470</name>
</gene>
<proteinExistence type="inferred from homology"/>
<accession>B7MX36</accession>
<comment type="function">
    <text evidence="1">Is required not only for elongation of protein synthesis but also for the initiation of all mRNA translation through initiator tRNA(fMet) aminoacylation.</text>
</comment>
<comment type="catalytic activity">
    <reaction evidence="1">
        <text>tRNA(Met) + L-methionine + ATP = L-methionyl-tRNA(Met) + AMP + diphosphate</text>
        <dbReference type="Rhea" id="RHEA:13481"/>
        <dbReference type="Rhea" id="RHEA-COMP:9667"/>
        <dbReference type="Rhea" id="RHEA-COMP:9698"/>
        <dbReference type="ChEBI" id="CHEBI:30616"/>
        <dbReference type="ChEBI" id="CHEBI:33019"/>
        <dbReference type="ChEBI" id="CHEBI:57844"/>
        <dbReference type="ChEBI" id="CHEBI:78442"/>
        <dbReference type="ChEBI" id="CHEBI:78530"/>
        <dbReference type="ChEBI" id="CHEBI:456215"/>
        <dbReference type="EC" id="6.1.1.10"/>
    </reaction>
</comment>
<comment type="cofactor">
    <cofactor evidence="1">
        <name>Zn(2+)</name>
        <dbReference type="ChEBI" id="CHEBI:29105"/>
    </cofactor>
    <text evidence="1">Binds 1 zinc ion per subunit.</text>
</comment>
<comment type="subunit">
    <text evidence="1">Homodimer.</text>
</comment>
<comment type="subcellular location">
    <subcellularLocation>
        <location evidence="1">Cytoplasm</location>
    </subcellularLocation>
</comment>
<comment type="similarity">
    <text evidence="1">Belongs to the class-I aminoacyl-tRNA synthetase family. MetG type 1 subfamily.</text>
</comment>
<organism>
    <name type="scientific">Escherichia coli O81 (strain ED1a)</name>
    <dbReference type="NCBI Taxonomy" id="585397"/>
    <lineage>
        <taxon>Bacteria</taxon>
        <taxon>Pseudomonadati</taxon>
        <taxon>Pseudomonadota</taxon>
        <taxon>Gammaproteobacteria</taxon>
        <taxon>Enterobacterales</taxon>
        <taxon>Enterobacteriaceae</taxon>
        <taxon>Escherichia</taxon>
    </lineage>
</organism>
<feature type="chain" id="PRO_1000118733" description="Methionine--tRNA ligase">
    <location>
        <begin position="1"/>
        <end position="677"/>
    </location>
</feature>
<feature type="domain" description="tRNA-binding" evidence="1">
    <location>
        <begin position="575"/>
        <end position="677"/>
    </location>
</feature>
<feature type="short sequence motif" description="'HIGH' region">
    <location>
        <begin position="15"/>
        <end position="25"/>
    </location>
</feature>
<feature type="short sequence motif" description="'KMSKS' region">
    <location>
        <begin position="333"/>
        <end position="337"/>
    </location>
</feature>
<feature type="binding site" evidence="1">
    <location>
        <position position="146"/>
    </location>
    <ligand>
        <name>Zn(2+)</name>
        <dbReference type="ChEBI" id="CHEBI:29105"/>
    </ligand>
</feature>
<feature type="binding site" evidence="1">
    <location>
        <position position="149"/>
    </location>
    <ligand>
        <name>Zn(2+)</name>
        <dbReference type="ChEBI" id="CHEBI:29105"/>
    </ligand>
</feature>
<feature type="binding site" evidence="1">
    <location>
        <position position="159"/>
    </location>
    <ligand>
        <name>Zn(2+)</name>
        <dbReference type="ChEBI" id="CHEBI:29105"/>
    </ligand>
</feature>
<feature type="binding site" evidence="1">
    <location>
        <position position="162"/>
    </location>
    <ligand>
        <name>Zn(2+)</name>
        <dbReference type="ChEBI" id="CHEBI:29105"/>
    </ligand>
</feature>
<feature type="binding site" evidence="1">
    <location>
        <position position="336"/>
    </location>
    <ligand>
        <name>ATP</name>
        <dbReference type="ChEBI" id="CHEBI:30616"/>
    </ligand>
</feature>
<evidence type="ECO:0000255" key="1">
    <source>
        <dbReference type="HAMAP-Rule" id="MF_00098"/>
    </source>
</evidence>
<sequence length="677" mass="76255">MTQVAKKILVTCALPYANGSIHLGHMLEHIQADVWVRYQRMRGHEVNFICADDAHGTPIMLKAQQLGITPEQMIGEMSQEHQTDFAGFNISYDNYHSTHSEENRQLSELIYSRLKENGFIKNRTISQLYDPEKGMFLPDRFVKGTCPKCKSPDQYGDNCEVCGATYSPTELIEPKSVVSGATPVMRDSEHFFFDLPSFSEMLQAWTRSGALQEQVANKMQEWFESGLQQWDISRDAPYFGFEIPNAPGKYFYVWLDAPIGYMGSFKNLCDKRGDSVSFDEYWKKDSTAELYHFIGKDIVYFHSLFWPAMLEGSNFRKPTNLFVHGYVTVNGAKMSKSRGTFIKASTWLNHFDADSLRYYYTAKLSSRIDDIDLNLEDFVQRVNADIVNKVVNLASRNAGFINKRFDGVLASELADPQLYKTFTDAAEVIGEAWESREFGKAIREIMALADLANRYVDEQAPWVVAKQEGRDADLQAICSMGINLFRVLMTYLKPVLPKLTERAEAFLNTELTWDGIQQPLLGHKVNPFKALYNRIDMKQVEALVEASKEEVKAAAAPVTGPLADDPIQETITFDDFAKVDLRVALIENAEFVEGSDKLLRLTLDLGGEKRNVFSGIRSAYPDPQALIGRHTIMVANLAPRKMRFGISEGMVMAAGPGGKDIFLLSPDAGAKPGHQVK</sequence>